<feature type="transit peptide" description="Chloroplast" evidence="1">
    <location>
        <begin position="1"/>
        <end position="74"/>
    </location>
</feature>
<feature type="chain" id="PRO_0000035710" description="Triose phosphate/phosphate translocator, chloroplastic">
    <location>
        <begin position="75"/>
        <end position="404"/>
    </location>
</feature>
<feature type="topological domain" description="Chloroplast intermembrane" evidence="2">
    <location>
        <begin position="75"/>
        <end position="98"/>
    </location>
</feature>
<feature type="transmembrane region" description="Helical" evidence="2">
    <location>
        <begin position="99"/>
        <end position="119"/>
    </location>
</feature>
<feature type="topological domain" description="Lumenal" evidence="2">
    <location>
        <begin position="120"/>
        <end position="131"/>
    </location>
</feature>
<feature type="transmembrane region" description="Helical" evidence="2">
    <location>
        <begin position="132"/>
        <end position="152"/>
    </location>
</feature>
<feature type="topological domain" description="Chloroplast intermembrane" evidence="2">
    <location>
        <begin position="153"/>
        <end position="209"/>
    </location>
</feature>
<feature type="transmembrane region" description="Helical" evidence="2">
    <location>
        <begin position="210"/>
        <end position="230"/>
    </location>
</feature>
<feature type="topological domain" description="Lumenal" evidence="2">
    <location>
        <begin position="231"/>
        <end position="274"/>
    </location>
</feature>
<feature type="transmembrane region" description="Helical" evidence="2">
    <location>
        <begin position="275"/>
        <end position="294"/>
    </location>
</feature>
<feature type="topological domain" description="Chloroplast intermembrane" evidence="2">
    <location>
        <begin position="295"/>
        <end position="372"/>
    </location>
</feature>
<feature type="transmembrane region" description="Helical" evidence="2">
    <location>
        <begin position="373"/>
        <end position="393"/>
    </location>
</feature>
<feature type="topological domain" description="Lumenal" evidence="2">
    <location>
        <begin position="394"/>
        <end position="404"/>
    </location>
</feature>
<reference key="1">
    <citation type="journal article" date="1989" name="EMBO J.">
        <title>The triose phosphate-3-phosphoglycerate-phosphate translocator from spinach chloroplasts: nucleotide sequence of a full-length cDNA clone and import of the in vitro synthesized precursor protein into chloroplasts.</title>
        <authorList>
            <person name="Fluegge U.-I."/>
            <person name="Fischer K."/>
            <person name="Gross A."/>
            <person name="Lottspeich F."/>
            <person name="Eckerskorn C."/>
            <person name="Sebald W."/>
        </authorList>
    </citation>
    <scope>NUCLEOTIDE SEQUENCE [MRNA]</scope>
    <scope>PARTIAL PROTEIN SEQUENCE</scope>
    <source>
        <tissue>Leaf</tissue>
    </source>
</reference>
<reference key="2">
    <citation type="journal article" date="1991" name="Nature">
        <title>The major chloroplast envelope polypeptide is the phosphate translocator and not the protein import receptor.</title>
        <authorList>
            <person name="Fluegge U.-I."/>
            <person name="Weber A."/>
            <person name="Fischer K."/>
            <person name="Lottspeich F."/>
            <person name="Eckerskorn C."/>
            <person name="Waegemann K."/>
            <person name="Soll J."/>
        </authorList>
    </citation>
    <scope>PROTEIN SEQUENCE OF 91-99</scope>
    <scope>FUNCTION</scope>
</reference>
<evidence type="ECO:0000250" key="1"/>
<evidence type="ECO:0000255" key="2"/>
<evidence type="ECO:0000269" key="3">
    <source ref="2"/>
</evidence>
<evidence type="ECO:0000305" key="4"/>
<proteinExistence type="evidence at protein level"/>
<dbReference type="EMBL" id="X13754">
    <property type="protein sequence ID" value="CAA32016.1"/>
    <property type="molecule type" value="mRNA"/>
</dbReference>
<dbReference type="PIR" id="S03638">
    <property type="entry name" value="S03638"/>
</dbReference>
<dbReference type="RefSeq" id="NP_001413288.1">
    <property type="nucleotide sequence ID" value="NM_001426359.1"/>
</dbReference>
<dbReference type="SMR" id="P11869"/>
<dbReference type="GeneID" id="110784890"/>
<dbReference type="OrthoDB" id="6418713at2759"/>
<dbReference type="Proteomes" id="UP001155700">
    <property type="component" value="Unplaced"/>
</dbReference>
<dbReference type="GO" id="GO:0031969">
    <property type="term" value="C:chloroplast membrane"/>
    <property type="evidence" value="ECO:0007669"/>
    <property type="project" value="UniProtKB-SubCell"/>
</dbReference>
<dbReference type="GO" id="GO:0005794">
    <property type="term" value="C:Golgi apparatus"/>
    <property type="evidence" value="ECO:0000318"/>
    <property type="project" value="GO_Central"/>
</dbReference>
<dbReference type="GO" id="GO:0015297">
    <property type="term" value="F:antiporter activity"/>
    <property type="evidence" value="ECO:0000318"/>
    <property type="project" value="GO_Central"/>
</dbReference>
<dbReference type="GO" id="GO:0015605">
    <property type="term" value="F:organophosphate ester transmembrane transporter activity"/>
    <property type="evidence" value="ECO:0007669"/>
    <property type="project" value="UniProtKB-ARBA"/>
</dbReference>
<dbReference type="GO" id="GO:0015120">
    <property type="term" value="F:phosphoglycerate transmembrane transporter activity"/>
    <property type="evidence" value="ECO:0007669"/>
    <property type="project" value="UniProtKB-ARBA"/>
</dbReference>
<dbReference type="GO" id="GO:0055085">
    <property type="term" value="P:transmembrane transport"/>
    <property type="evidence" value="ECO:0000318"/>
    <property type="project" value="GO_Central"/>
</dbReference>
<dbReference type="InterPro" id="IPR004853">
    <property type="entry name" value="Sugar_P_trans_dom"/>
</dbReference>
<dbReference type="InterPro" id="IPR004696">
    <property type="entry name" value="Tpt_PEP_transl"/>
</dbReference>
<dbReference type="InterPro" id="IPR050186">
    <property type="entry name" value="TPT_transporter"/>
</dbReference>
<dbReference type="NCBIfam" id="TIGR00817">
    <property type="entry name" value="tpt"/>
    <property type="match status" value="1"/>
</dbReference>
<dbReference type="PANTHER" id="PTHR11132">
    <property type="entry name" value="SOLUTE CARRIER FAMILY 35"/>
    <property type="match status" value="1"/>
</dbReference>
<dbReference type="Pfam" id="PF03151">
    <property type="entry name" value="TPT"/>
    <property type="match status" value="1"/>
</dbReference>
<dbReference type="SUPFAM" id="SSF103481">
    <property type="entry name" value="Multidrug resistance efflux transporter EmrE"/>
    <property type="match status" value="2"/>
</dbReference>
<organism>
    <name type="scientific">Spinacia oleracea</name>
    <name type="common">Spinach</name>
    <dbReference type="NCBI Taxonomy" id="3562"/>
    <lineage>
        <taxon>Eukaryota</taxon>
        <taxon>Viridiplantae</taxon>
        <taxon>Streptophyta</taxon>
        <taxon>Embryophyta</taxon>
        <taxon>Tracheophyta</taxon>
        <taxon>Spermatophyta</taxon>
        <taxon>Magnoliopsida</taxon>
        <taxon>eudicotyledons</taxon>
        <taxon>Gunneridae</taxon>
        <taxon>Pentapetalae</taxon>
        <taxon>Caryophyllales</taxon>
        <taxon>Chenopodiaceae</taxon>
        <taxon>Chenopodioideae</taxon>
        <taxon>Anserineae</taxon>
        <taxon>Spinacia</taxon>
    </lineage>
</organism>
<accession>P11869</accession>
<name>TPT_SPIOL</name>
<keyword id="KW-0150">Chloroplast</keyword>
<keyword id="KW-0903">Direct protein sequencing</keyword>
<keyword id="KW-0472">Membrane</keyword>
<keyword id="KW-0934">Plastid</keyword>
<keyword id="KW-1185">Reference proteome</keyword>
<keyword id="KW-0809">Transit peptide</keyword>
<keyword id="KW-0812">Transmembrane</keyword>
<keyword id="KW-1133">Transmembrane helix</keyword>
<keyword id="KW-0813">Transport</keyword>
<protein>
    <recommendedName>
        <fullName>Triose phosphate/phosphate translocator, chloroplastic</fullName>
        <shortName>cTPT</shortName>
    </recommendedName>
    <alternativeName>
        <fullName>E29</fullName>
    </alternativeName>
    <alternativeName>
        <fullName>p36</fullName>
    </alternativeName>
</protein>
<comment type="function">
    <text evidence="3">Mediates the export of fixed carbons from the chloroplasts into the cytosol in the form of triose phosphates.</text>
</comment>
<comment type="subcellular location">
    <subcellularLocation>
        <location>Plastid</location>
        <location>Chloroplast membrane</location>
        <topology>Multi-pass membrane protein</topology>
    </subcellularLocation>
    <text>Located in zones of contact between the inner and outer membrane of the chloroplast.</text>
</comment>
<comment type="PTM">
    <text>The N-terminus is blocked.</text>
</comment>
<comment type="similarity">
    <text evidence="4">Belongs to the TPT transporter family. TPT (TC 2.A.7.9) subfamily.</text>
</comment>
<comment type="caution">
    <text evidence="4">Was originally thought to function as a chloroplast protein import receptor.</text>
</comment>
<sequence>MESRVLSRTTAIAALPKLFRPSREAASFGFATGVKTPVGLVKDGGSLTWGRQLRPVLLLEPVQTGPVCSRREKTAVQPCRAASGSSGEAKTGFLEKYPALVTGSFFFMWYFLNVIFNILNKKIYNYFPYPYFVSVIHLFVGVVYCLASWSVGLPKRAPMDSKLLKLLIPVAVCHAIGHVTSNVSFAAVAVSFTHTIKALEPFFNAAASQFVLGQSIPITLWLSLAPVVIGVSMASLTELSFNWLGFISAMISNVSFTYRSLYSKKAMTDMDSTNIYAYISIIALFVCLPPAIIVEGPQLMKHGFNDAIAKVGLTKFISDLFWVGMFYHLYNQLATNTLERVAPLTHAVGNVLKRVFVIGFSIIAFGNKISTQTAIGTSIAIAGVALYSLIKAKMEEEKRQMKST</sequence>